<protein>
    <recommendedName>
        <fullName>Probable non-structural 41.0 kDa protein</fullName>
    </recommendedName>
</protein>
<dbReference type="EMBL" id="X55701">
    <property type="protein sequence ID" value="CAA39227.1"/>
    <property type="molecule type" value="Genomic_RNA"/>
</dbReference>
<dbReference type="PIR" id="A38545">
    <property type="entry name" value="A38545"/>
</dbReference>
<dbReference type="InterPro" id="IPR010521">
    <property type="entry name" value="Fijivirus_VP7-1-like"/>
</dbReference>
<dbReference type="Pfam" id="PF06503">
    <property type="entry name" value="DUF1101"/>
    <property type="match status" value="1"/>
</dbReference>
<gene>
    <name type="primary">S6</name>
</gene>
<reference key="1">
    <citation type="journal article" date="1991" name="Virology">
        <title>Cloning of the maize rough dwarf virus genome: molecular confirmation of the plant-reovirus classification scheme and identification of two large nonoverlapping coding domains within a single genomic segment.</title>
        <authorList>
            <person name="Marzachi C."/>
            <person name="Boccardo G."/>
            <person name="Nuss D.L."/>
        </authorList>
    </citation>
    <scope>NUCLEOTIDE SEQUENCE [GENOMIC RNA]</scope>
</reference>
<sequence>MDRPAREHLKFSKANTKNEIREMRIYKDDTADGLCFSEINVGCTSTTPKMSLSDYFSSVSCSFDGEMRIPDIPLKMYGDLHFHEQFTNDVDLDLLCWQLLSSNQDSRALCVNILRMVTSLSLGNAFISEGRYHYAIDTTEQTSAEDSDALRFLARIAKIVIKNDVDKSDVVAAQQTLIYYYFGNSYQGIHLNWDSKSSQQSIHGYSTSEVCLDHYIRMKVDLFHGLRSKNLVYGGNYQLVYQALFYYYVITNGRFSSGFNVRKDSIKSYFVPNDDPSMCNVSPRKPSLSLMFIRAVLITILIKDYSPVKEIPKYLRQLEVENPLTNSCLITDNGLRSEVPMNAAAPSAPTPTELPVFSPPSS</sequence>
<organism>
    <name type="scientific">Maize rough dwarf virus</name>
    <name type="common">MRDV</name>
    <dbReference type="NCBI Taxonomy" id="10989"/>
    <lineage>
        <taxon>Viruses</taxon>
        <taxon>Riboviria</taxon>
        <taxon>Orthornavirae</taxon>
        <taxon>Duplornaviricota</taxon>
        <taxon>Resentoviricetes</taxon>
        <taxon>Reovirales</taxon>
        <taxon>Spinareoviridae</taxon>
        <taxon>Fijivirus</taxon>
    </lineage>
</organism>
<accession>P22119</accession>
<organismHost>
    <name type="scientific">Avena sativa</name>
    <name type="common">Oat</name>
    <dbReference type="NCBI Taxonomy" id="4498"/>
</organismHost>
<organismHost>
    <name type="scientific">Cynodon dactylon</name>
    <name type="common">Bermuda grass</name>
    <name type="synonym">Panicum dactylon</name>
    <dbReference type="NCBI Taxonomy" id="28909"/>
</organismHost>
<organismHost>
    <name type="scientific">Digitaria sanguinalis</name>
    <dbReference type="NCBI Taxonomy" id="121769"/>
</organismHost>
<organismHost>
    <name type="scientific">Echinochloa crus-galli</name>
    <name type="common">Barnyard grass</name>
    <name type="synonym">Panicum crus-galli</name>
    <dbReference type="NCBI Taxonomy" id="90397"/>
</organismHost>
<organismHost>
    <name type="scientific">Hordeum vulgare</name>
    <name type="common">Barley</name>
    <dbReference type="NCBI Taxonomy" id="4513"/>
</organismHost>
<organismHost>
    <name type="scientific">Lolium perenne</name>
    <name type="common">Perennial ryegrass</name>
    <dbReference type="NCBI Taxonomy" id="4522"/>
</organismHost>
<organismHost>
    <name type="scientific">Setaria verticillata</name>
    <dbReference type="NCBI Taxonomy" id="149379"/>
</organismHost>
<organismHost>
    <name type="scientific">Triticum aestivum</name>
    <name type="common">Wheat</name>
    <dbReference type="NCBI Taxonomy" id="4565"/>
</organismHost>
<organismHost>
    <name type="scientific">Zea mays</name>
    <name type="common">Maize</name>
    <dbReference type="NCBI Taxonomy" id="4577"/>
</organismHost>
<proteinExistence type="predicted"/>
<evidence type="ECO:0000256" key="1">
    <source>
        <dbReference type="SAM" id="MobiDB-lite"/>
    </source>
</evidence>
<name>VP61_MRDV</name>
<feature type="chain" id="PRO_0000222805" description="Probable non-structural 41.0 kDa protein">
    <location>
        <begin position="1"/>
        <end position="362"/>
    </location>
</feature>
<feature type="region of interest" description="Disordered" evidence="1">
    <location>
        <begin position="341"/>
        <end position="362"/>
    </location>
</feature>
<feature type="sequence variant">
    <original>Y</original>
    <variation>C</variation>
    <location>
        <position position="77"/>
    </location>
</feature>